<name>DNAJ_SYNJA</name>
<reference key="1">
    <citation type="journal article" date="2007" name="ISME J.">
        <title>Population level functional diversity in a microbial community revealed by comparative genomic and metagenomic analyses.</title>
        <authorList>
            <person name="Bhaya D."/>
            <person name="Grossman A.R."/>
            <person name="Steunou A.-S."/>
            <person name="Khuri N."/>
            <person name="Cohan F.M."/>
            <person name="Hamamura N."/>
            <person name="Melendrez M.C."/>
            <person name="Bateson M.M."/>
            <person name="Ward D.M."/>
            <person name="Heidelberg J.F."/>
        </authorList>
    </citation>
    <scope>NUCLEOTIDE SEQUENCE [LARGE SCALE GENOMIC DNA]</scope>
    <source>
        <strain>JA-3-3Ab</strain>
    </source>
</reference>
<keyword id="KW-0143">Chaperone</keyword>
<keyword id="KW-0963">Cytoplasm</keyword>
<keyword id="KW-0235">DNA replication</keyword>
<keyword id="KW-0479">Metal-binding</keyword>
<keyword id="KW-0677">Repeat</keyword>
<keyword id="KW-0346">Stress response</keyword>
<keyword id="KW-0862">Zinc</keyword>
<keyword id="KW-0863">Zinc-finger</keyword>
<comment type="function">
    <text evidence="1">Participates actively in the response to hyperosmotic and heat shock by preventing the aggregation of stress-denatured proteins and by disaggregating proteins, also in an autonomous, DnaK-independent fashion. Unfolded proteins bind initially to DnaJ; upon interaction with the DnaJ-bound protein, DnaK hydrolyzes its bound ATP, resulting in the formation of a stable complex. GrpE releases ADP from DnaK; ATP binding to DnaK triggers the release of the substrate protein, thus completing the reaction cycle. Several rounds of ATP-dependent interactions between DnaJ, DnaK and GrpE are required for fully efficient folding. Also involved, together with DnaK and GrpE, in the DNA replication of plasmids through activation of initiation proteins.</text>
</comment>
<comment type="cofactor">
    <cofactor evidence="1">
        <name>Zn(2+)</name>
        <dbReference type="ChEBI" id="CHEBI:29105"/>
    </cofactor>
    <text evidence="1">Binds 2 Zn(2+) ions per monomer.</text>
</comment>
<comment type="subunit">
    <text evidence="1">Homodimer.</text>
</comment>
<comment type="subcellular location">
    <subcellularLocation>
        <location evidence="1">Cytoplasm</location>
    </subcellularLocation>
</comment>
<comment type="domain">
    <text evidence="1">The J domain is necessary and sufficient to stimulate DnaK ATPase activity. Zinc center 1 plays an important role in the autonomous, DnaK-independent chaperone activity of DnaJ. Zinc center 2 is essential for interaction with DnaK and for DnaJ activity.</text>
</comment>
<comment type="similarity">
    <text evidence="1">Belongs to the DnaJ family.</text>
</comment>
<gene>
    <name evidence="1" type="primary">dnaJ</name>
    <name type="ordered locus">CYA_0788</name>
</gene>
<sequence>MARDYYEILGVSRDSSKEEIKRAYRRLARKYHPDVNKEPGAEDRFKEINRAYEVLSDDELRARYDRFGEAGLSGAAAAASGFQDFAGIGGFADLFESFFTNFAGGGVGYSRSRQGPVRGDDLRFDLKLEFLEAIFGGEKQIRISHLEVCPVCGGSGAKPGTDVKVCPTCGGAGQVRRATRTPFGNFTQVSICPTCGGAGRVLEEPCYNCNGEGLAQTTKKLRINIPAGVDSGTRLRVSGEGDAGRRGGPPGDLYVYLFVEPDPDFQRDGLTIFSQVRVSYLQAILGAKVLVPTVDSKAGLEEEAELTIPAGSQPGTVLTLEGKGVPRLGNPMLRGDHKITLVVEIPTRISSEERELLMRLAELHGERINKRDGFLGGLLRGLAQMPGNREREEE</sequence>
<dbReference type="EMBL" id="CP000239">
    <property type="protein sequence ID" value="ABC98994.1"/>
    <property type="molecule type" value="Genomic_DNA"/>
</dbReference>
<dbReference type="RefSeq" id="WP_011429678.1">
    <property type="nucleotide sequence ID" value="NC_007775.1"/>
</dbReference>
<dbReference type="SMR" id="Q2JW78"/>
<dbReference type="STRING" id="321327.CYA_0788"/>
<dbReference type="KEGG" id="cya:CYA_0788"/>
<dbReference type="eggNOG" id="COG0484">
    <property type="taxonomic scope" value="Bacteria"/>
</dbReference>
<dbReference type="HOGENOM" id="CLU_017633_0_1_3"/>
<dbReference type="OrthoDB" id="9779889at2"/>
<dbReference type="Proteomes" id="UP000008818">
    <property type="component" value="Chromosome"/>
</dbReference>
<dbReference type="GO" id="GO:0005737">
    <property type="term" value="C:cytoplasm"/>
    <property type="evidence" value="ECO:0007669"/>
    <property type="project" value="UniProtKB-SubCell"/>
</dbReference>
<dbReference type="GO" id="GO:0005524">
    <property type="term" value="F:ATP binding"/>
    <property type="evidence" value="ECO:0007669"/>
    <property type="project" value="InterPro"/>
</dbReference>
<dbReference type="GO" id="GO:0031072">
    <property type="term" value="F:heat shock protein binding"/>
    <property type="evidence" value="ECO:0007669"/>
    <property type="project" value="InterPro"/>
</dbReference>
<dbReference type="GO" id="GO:0051082">
    <property type="term" value="F:unfolded protein binding"/>
    <property type="evidence" value="ECO:0007669"/>
    <property type="project" value="UniProtKB-UniRule"/>
</dbReference>
<dbReference type="GO" id="GO:0008270">
    <property type="term" value="F:zinc ion binding"/>
    <property type="evidence" value="ECO:0007669"/>
    <property type="project" value="UniProtKB-UniRule"/>
</dbReference>
<dbReference type="GO" id="GO:0051085">
    <property type="term" value="P:chaperone cofactor-dependent protein refolding"/>
    <property type="evidence" value="ECO:0007669"/>
    <property type="project" value="TreeGrafter"/>
</dbReference>
<dbReference type="GO" id="GO:0006260">
    <property type="term" value="P:DNA replication"/>
    <property type="evidence" value="ECO:0007669"/>
    <property type="project" value="UniProtKB-KW"/>
</dbReference>
<dbReference type="GO" id="GO:0042026">
    <property type="term" value="P:protein refolding"/>
    <property type="evidence" value="ECO:0007669"/>
    <property type="project" value="TreeGrafter"/>
</dbReference>
<dbReference type="GO" id="GO:0009408">
    <property type="term" value="P:response to heat"/>
    <property type="evidence" value="ECO:0007669"/>
    <property type="project" value="InterPro"/>
</dbReference>
<dbReference type="CDD" id="cd06257">
    <property type="entry name" value="DnaJ"/>
    <property type="match status" value="1"/>
</dbReference>
<dbReference type="CDD" id="cd10747">
    <property type="entry name" value="DnaJ_C"/>
    <property type="match status" value="1"/>
</dbReference>
<dbReference type="CDD" id="cd10719">
    <property type="entry name" value="DnaJ_zf"/>
    <property type="match status" value="1"/>
</dbReference>
<dbReference type="FunFam" id="2.60.260.20:FF:000005">
    <property type="entry name" value="Chaperone protein dnaJ 1, mitochondrial"/>
    <property type="match status" value="1"/>
</dbReference>
<dbReference type="FunFam" id="1.10.287.110:FF:000031">
    <property type="entry name" value="Molecular chaperone DnaJ"/>
    <property type="match status" value="1"/>
</dbReference>
<dbReference type="FunFam" id="2.10.230.10:FF:000002">
    <property type="entry name" value="Molecular chaperone DnaJ"/>
    <property type="match status" value="1"/>
</dbReference>
<dbReference type="FunFam" id="2.60.260.20:FF:000009">
    <property type="entry name" value="Putative Mitochondrial DnaJ chaperone"/>
    <property type="match status" value="1"/>
</dbReference>
<dbReference type="Gene3D" id="1.10.287.110">
    <property type="entry name" value="DnaJ domain"/>
    <property type="match status" value="1"/>
</dbReference>
<dbReference type="Gene3D" id="2.10.230.10">
    <property type="entry name" value="Heat shock protein DnaJ, cysteine-rich domain"/>
    <property type="match status" value="1"/>
</dbReference>
<dbReference type="Gene3D" id="2.60.260.20">
    <property type="entry name" value="Urease metallochaperone UreE, N-terminal domain"/>
    <property type="match status" value="2"/>
</dbReference>
<dbReference type="HAMAP" id="MF_01152">
    <property type="entry name" value="DnaJ"/>
    <property type="match status" value="1"/>
</dbReference>
<dbReference type="InterPro" id="IPR012724">
    <property type="entry name" value="DnaJ"/>
</dbReference>
<dbReference type="InterPro" id="IPR002939">
    <property type="entry name" value="DnaJ_C"/>
</dbReference>
<dbReference type="InterPro" id="IPR001623">
    <property type="entry name" value="DnaJ_domain"/>
</dbReference>
<dbReference type="InterPro" id="IPR018253">
    <property type="entry name" value="DnaJ_domain_CS"/>
</dbReference>
<dbReference type="InterPro" id="IPR008971">
    <property type="entry name" value="HSP40/DnaJ_pept-bd"/>
</dbReference>
<dbReference type="InterPro" id="IPR001305">
    <property type="entry name" value="HSP_DnaJ_Cys-rich_dom"/>
</dbReference>
<dbReference type="InterPro" id="IPR036410">
    <property type="entry name" value="HSP_DnaJ_Cys-rich_dom_sf"/>
</dbReference>
<dbReference type="InterPro" id="IPR036869">
    <property type="entry name" value="J_dom_sf"/>
</dbReference>
<dbReference type="NCBIfam" id="TIGR02349">
    <property type="entry name" value="DnaJ_bact"/>
    <property type="match status" value="1"/>
</dbReference>
<dbReference type="NCBIfam" id="NF008035">
    <property type="entry name" value="PRK10767.1"/>
    <property type="match status" value="1"/>
</dbReference>
<dbReference type="NCBIfam" id="NF010886">
    <property type="entry name" value="PRK14293.1"/>
    <property type="match status" value="1"/>
</dbReference>
<dbReference type="PANTHER" id="PTHR43096:SF10">
    <property type="entry name" value="CHAPERONE PROTEIN DNAJ A6, CHLOROPLASTIC"/>
    <property type="match status" value="1"/>
</dbReference>
<dbReference type="PANTHER" id="PTHR43096">
    <property type="entry name" value="DNAJ HOMOLOG 1, MITOCHONDRIAL-RELATED"/>
    <property type="match status" value="1"/>
</dbReference>
<dbReference type="Pfam" id="PF00226">
    <property type="entry name" value="DnaJ"/>
    <property type="match status" value="1"/>
</dbReference>
<dbReference type="Pfam" id="PF01556">
    <property type="entry name" value="DnaJ_C"/>
    <property type="match status" value="1"/>
</dbReference>
<dbReference type="Pfam" id="PF00684">
    <property type="entry name" value="DnaJ_CXXCXGXG"/>
    <property type="match status" value="1"/>
</dbReference>
<dbReference type="PRINTS" id="PR00625">
    <property type="entry name" value="JDOMAIN"/>
</dbReference>
<dbReference type="SMART" id="SM00271">
    <property type="entry name" value="DnaJ"/>
    <property type="match status" value="1"/>
</dbReference>
<dbReference type="SUPFAM" id="SSF46565">
    <property type="entry name" value="Chaperone J-domain"/>
    <property type="match status" value="1"/>
</dbReference>
<dbReference type="SUPFAM" id="SSF57938">
    <property type="entry name" value="DnaJ/Hsp40 cysteine-rich domain"/>
    <property type="match status" value="1"/>
</dbReference>
<dbReference type="SUPFAM" id="SSF49493">
    <property type="entry name" value="HSP40/DnaJ peptide-binding domain"/>
    <property type="match status" value="2"/>
</dbReference>
<dbReference type="PROSITE" id="PS00636">
    <property type="entry name" value="DNAJ_1"/>
    <property type="match status" value="1"/>
</dbReference>
<dbReference type="PROSITE" id="PS50076">
    <property type="entry name" value="DNAJ_2"/>
    <property type="match status" value="1"/>
</dbReference>
<dbReference type="PROSITE" id="PS51188">
    <property type="entry name" value="ZF_CR"/>
    <property type="match status" value="1"/>
</dbReference>
<accession>Q2JW78</accession>
<proteinExistence type="inferred from homology"/>
<organism>
    <name type="scientific">Synechococcus sp. (strain JA-3-3Ab)</name>
    <name type="common">Cyanobacteria bacterium Yellowstone A-Prime</name>
    <dbReference type="NCBI Taxonomy" id="321327"/>
    <lineage>
        <taxon>Bacteria</taxon>
        <taxon>Bacillati</taxon>
        <taxon>Cyanobacteriota</taxon>
        <taxon>Cyanophyceae</taxon>
        <taxon>Synechococcales</taxon>
        <taxon>Synechococcaceae</taxon>
        <taxon>Synechococcus</taxon>
    </lineage>
</organism>
<protein>
    <recommendedName>
        <fullName evidence="1">Chaperone protein DnaJ</fullName>
    </recommendedName>
</protein>
<feature type="chain" id="PRO_1000085320" description="Chaperone protein DnaJ">
    <location>
        <begin position="1"/>
        <end position="394"/>
    </location>
</feature>
<feature type="domain" description="J" evidence="1">
    <location>
        <begin position="4"/>
        <end position="68"/>
    </location>
</feature>
<feature type="repeat" description="CXXCXGXG motif">
    <location>
        <begin position="149"/>
        <end position="156"/>
    </location>
</feature>
<feature type="repeat" description="CXXCXGXG motif">
    <location>
        <begin position="166"/>
        <end position="173"/>
    </location>
</feature>
<feature type="repeat" description="CXXCXGXG motif">
    <location>
        <begin position="192"/>
        <end position="199"/>
    </location>
</feature>
<feature type="repeat" description="CXXCXGXG motif">
    <location>
        <begin position="206"/>
        <end position="213"/>
    </location>
</feature>
<feature type="zinc finger region" description="CR-type" evidence="1">
    <location>
        <begin position="136"/>
        <end position="218"/>
    </location>
</feature>
<feature type="binding site" evidence="1">
    <location>
        <position position="149"/>
    </location>
    <ligand>
        <name>Zn(2+)</name>
        <dbReference type="ChEBI" id="CHEBI:29105"/>
        <label>1</label>
    </ligand>
</feature>
<feature type="binding site" evidence="1">
    <location>
        <position position="152"/>
    </location>
    <ligand>
        <name>Zn(2+)</name>
        <dbReference type="ChEBI" id="CHEBI:29105"/>
        <label>1</label>
    </ligand>
</feature>
<feature type="binding site" evidence="1">
    <location>
        <position position="166"/>
    </location>
    <ligand>
        <name>Zn(2+)</name>
        <dbReference type="ChEBI" id="CHEBI:29105"/>
        <label>2</label>
    </ligand>
</feature>
<feature type="binding site" evidence="1">
    <location>
        <position position="169"/>
    </location>
    <ligand>
        <name>Zn(2+)</name>
        <dbReference type="ChEBI" id="CHEBI:29105"/>
        <label>2</label>
    </ligand>
</feature>
<feature type="binding site" evidence="1">
    <location>
        <position position="192"/>
    </location>
    <ligand>
        <name>Zn(2+)</name>
        <dbReference type="ChEBI" id="CHEBI:29105"/>
        <label>2</label>
    </ligand>
</feature>
<feature type="binding site" evidence="1">
    <location>
        <position position="195"/>
    </location>
    <ligand>
        <name>Zn(2+)</name>
        <dbReference type="ChEBI" id="CHEBI:29105"/>
        <label>2</label>
    </ligand>
</feature>
<feature type="binding site" evidence="1">
    <location>
        <position position="206"/>
    </location>
    <ligand>
        <name>Zn(2+)</name>
        <dbReference type="ChEBI" id="CHEBI:29105"/>
        <label>1</label>
    </ligand>
</feature>
<feature type="binding site" evidence="1">
    <location>
        <position position="209"/>
    </location>
    <ligand>
        <name>Zn(2+)</name>
        <dbReference type="ChEBI" id="CHEBI:29105"/>
        <label>1</label>
    </ligand>
</feature>
<evidence type="ECO:0000255" key="1">
    <source>
        <dbReference type="HAMAP-Rule" id="MF_01152"/>
    </source>
</evidence>